<reference key="1">
    <citation type="submission" date="2006-12" db="EMBL/GenBank/DDBJ databases">
        <title>Complete sequence of Mycobacterium vanbaalenii PYR-1.</title>
        <authorList>
            <consortium name="US DOE Joint Genome Institute"/>
            <person name="Copeland A."/>
            <person name="Lucas S."/>
            <person name="Lapidus A."/>
            <person name="Barry K."/>
            <person name="Detter J.C."/>
            <person name="Glavina del Rio T."/>
            <person name="Hammon N."/>
            <person name="Israni S."/>
            <person name="Dalin E."/>
            <person name="Tice H."/>
            <person name="Pitluck S."/>
            <person name="Singan V."/>
            <person name="Schmutz J."/>
            <person name="Larimer F."/>
            <person name="Land M."/>
            <person name="Hauser L."/>
            <person name="Kyrpides N."/>
            <person name="Anderson I.J."/>
            <person name="Miller C."/>
            <person name="Richardson P."/>
        </authorList>
    </citation>
    <scope>NUCLEOTIDE SEQUENCE [LARGE SCALE GENOMIC DNA]</scope>
    <source>
        <strain>DSM 7251 / JCM 13017 / BCRC 16820 / KCTC 9966 / NRRL B-24157 / PYR-1</strain>
    </source>
</reference>
<reference evidence="6 7 8" key="2">
    <citation type="journal article" date="2015" name="Science">
        <title>Crystal structure of a mycobacterial Insig homolog provides insight into how these sensors monitor sterol levels.</title>
        <authorList>
            <person name="Ren R."/>
            <person name="Zhou X."/>
            <person name="He Y."/>
            <person name="Ke M."/>
            <person name="Wu J."/>
            <person name="Liu X."/>
            <person name="Yan C."/>
            <person name="Wu Y."/>
            <person name="Gong X."/>
            <person name="Lei X."/>
            <person name="Yan S.F."/>
            <person name="Radhakrishnan A."/>
            <person name="Yan N."/>
        </authorList>
    </citation>
    <scope>X-RAY CRYSTALLOGRAPHY (1.90 ANGSTROMS) IN COMPLEX WITH DIACYLGLYCEROL</scope>
    <scope>FUNCTION</scope>
    <scope>SUBCELLULAR LOCATION</scope>
    <scope>SUBUNIT</scope>
</reference>
<comment type="function">
    <text evidence="2">Diacylglycerol-binding protein.</text>
</comment>
<comment type="subunit">
    <text evidence="2">Homotrimer.</text>
</comment>
<comment type="interaction">
    <interactant intactId="EBI-16163958">
        <id>A1T557</id>
    </interactant>
    <interactant intactId="EBI-16163958">
        <id>A1T557</id>
        <label>Mvan_1475</label>
    </interactant>
    <organismsDiffer>false</organismsDiffer>
    <experiments>3</experiments>
</comment>
<comment type="subcellular location">
    <subcellularLocation>
        <location evidence="2">Membrane</location>
        <topology evidence="2">Multi-pass membrane protein</topology>
    </subcellularLocation>
</comment>
<comment type="domain">
    <text evidence="1">The KxHxx motif mediates association with the coatomer complex.</text>
</comment>
<comment type="similarity">
    <text evidence="4">Belongs to the INSIG family.</text>
</comment>
<keyword id="KW-0002">3D-structure</keyword>
<keyword id="KW-0446">Lipid-binding</keyword>
<keyword id="KW-0472">Membrane</keyword>
<keyword id="KW-0812">Transmembrane</keyword>
<keyword id="KW-1133">Transmembrane helix</keyword>
<protein>
    <recommendedName>
        <fullName evidence="3">INSIG protein homolog</fullName>
        <shortName evidence="3">MvINS</shortName>
    </recommendedName>
</protein>
<organism>
    <name type="scientific">Mycolicibacterium vanbaalenii (strain DSM 7251 / JCM 13017 / BCRC 16820 / KCTC 9966 / NRRL B-24157 / PYR-1)</name>
    <name type="common">Mycobacterium vanbaalenii</name>
    <dbReference type="NCBI Taxonomy" id="350058"/>
    <lineage>
        <taxon>Bacteria</taxon>
        <taxon>Bacillati</taxon>
        <taxon>Actinomycetota</taxon>
        <taxon>Actinomycetes</taxon>
        <taxon>Mycobacteriales</taxon>
        <taxon>Mycobacteriaceae</taxon>
        <taxon>Mycolicibacterium</taxon>
    </lineage>
</organism>
<name>INSIG_MYCVP</name>
<proteinExistence type="evidence at protein level"/>
<evidence type="ECO:0000250" key="1">
    <source>
        <dbReference type="UniProtKB" id="Q9Y5U4"/>
    </source>
</evidence>
<evidence type="ECO:0000269" key="2">
    <source>
    </source>
</evidence>
<evidence type="ECO:0000303" key="3">
    <source>
    </source>
</evidence>
<evidence type="ECO:0000305" key="4"/>
<evidence type="ECO:0000312" key="5">
    <source>
        <dbReference type="EMBL" id="ABM12307.1"/>
    </source>
</evidence>
<evidence type="ECO:0007744" key="6">
    <source>
        <dbReference type="PDB" id="4XU4"/>
    </source>
</evidence>
<evidence type="ECO:0007744" key="7">
    <source>
        <dbReference type="PDB" id="4XU5"/>
    </source>
</evidence>
<evidence type="ECO:0007744" key="8">
    <source>
        <dbReference type="PDB" id="4XU6"/>
    </source>
</evidence>
<evidence type="ECO:0007829" key="9">
    <source>
        <dbReference type="PDB" id="4XU6"/>
    </source>
</evidence>
<accession>A1T557</accession>
<dbReference type="EMBL" id="CP000511">
    <property type="protein sequence ID" value="ABM12307.1"/>
    <property type="molecule type" value="Genomic_DNA"/>
</dbReference>
<dbReference type="RefSeq" id="WP_011778733.1">
    <property type="nucleotide sequence ID" value="NC_008726.1"/>
</dbReference>
<dbReference type="PDB" id="4XU4">
    <property type="method" value="X-ray"/>
    <property type="resolution" value="1.90 A"/>
    <property type="chains" value="A=1-204"/>
</dbReference>
<dbReference type="PDB" id="4XU5">
    <property type="method" value="X-ray"/>
    <property type="resolution" value="2.10 A"/>
    <property type="chains" value="A=1-204"/>
</dbReference>
<dbReference type="PDB" id="4XU6">
    <property type="method" value="X-ray"/>
    <property type="resolution" value="1.90 A"/>
    <property type="chains" value="A=1-204"/>
</dbReference>
<dbReference type="PDBsum" id="4XU4"/>
<dbReference type="PDBsum" id="4XU5"/>
<dbReference type="PDBsum" id="4XU6"/>
<dbReference type="SMR" id="A1T557"/>
<dbReference type="DIP" id="DIP-61665N"/>
<dbReference type="STRING" id="350058.Mvan_1475"/>
<dbReference type="KEGG" id="mva:Mvan_1475"/>
<dbReference type="eggNOG" id="ENOG5031FRC">
    <property type="taxonomic scope" value="Bacteria"/>
</dbReference>
<dbReference type="HOGENOM" id="CLU_1407438_0_0_11"/>
<dbReference type="EvolutionaryTrace" id="A1T557"/>
<dbReference type="Proteomes" id="UP000009159">
    <property type="component" value="Chromosome"/>
</dbReference>
<dbReference type="GO" id="GO:0016020">
    <property type="term" value="C:membrane"/>
    <property type="evidence" value="ECO:0007669"/>
    <property type="project" value="UniProtKB-SubCell"/>
</dbReference>
<dbReference type="GO" id="GO:0042802">
    <property type="term" value="F:identical protein binding"/>
    <property type="evidence" value="ECO:0000353"/>
    <property type="project" value="IntAct"/>
</dbReference>
<dbReference type="GO" id="GO:0008289">
    <property type="term" value="F:lipid binding"/>
    <property type="evidence" value="ECO:0007669"/>
    <property type="project" value="UniProtKB-KW"/>
</dbReference>
<feature type="chain" id="PRO_0000450693" description="INSIG protein homolog">
    <location>
        <begin position="1"/>
        <end position="204"/>
    </location>
</feature>
<feature type="transmembrane region" description="Helical" evidence="2 6 7 8">
    <location>
        <begin position="5"/>
        <end position="27"/>
    </location>
</feature>
<feature type="transmembrane region" description="Helical" evidence="2 6 7 8">
    <location>
        <begin position="47"/>
        <end position="64"/>
    </location>
</feature>
<feature type="transmembrane region" description="Helical" evidence="2 6 7 8">
    <location>
        <begin position="76"/>
        <end position="97"/>
    </location>
</feature>
<feature type="transmembrane region" description="Helical" evidence="2 6 7 8">
    <location>
        <begin position="101"/>
        <end position="118"/>
    </location>
</feature>
<feature type="transmembrane region" description="Helical" evidence="2 6 7 8">
    <location>
        <begin position="124"/>
        <end position="145"/>
    </location>
</feature>
<feature type="transmembrane region" description="Helical" evidence="2 6 7 8">
    <location>
        <begin position="162"/>
        <end position="179"/>
    </location>
</feature>
<feature type="binding site" evidence="2 7">
    <location>
        <position position="26"/>
    </location>
    <ligand>
        <name>a 1,2-diacyl-sn-glycerol</name>
        <dbReference type="ChEBI" id="CHEBI:17815"/>
    </ligand>
</feature>
<feature type="binding site" evidence="2 7">
    <location>
        <position position="150"/>
    </location>
    <ligand>
        <name>a 1,2-diacyl-sn-glycerol</name>
        <dbReference type="ChEBI" id="CHEBI:17815"/>
    </ligand>
</feature>
<feature type="helix" evidence="9">
    <location>
        <begin position="5"/>
        <end position="28"/>
    </location>
</feature>
<feature type="strand" evidence="9">
    <location>
        <begin position="31"/>
        <end position="34"/>
    </location>
</feature>
<feature type="helix" evidence="9">
    <location>
        <begin position="48"/>
        <end position="64"/>
    </location>
</feature>
<feature type="helix" evidence="9">
    <location>
        <begin position="76"/>
        <end position="96"/>
    </location>
</feature>
<feature type="helix" evidence="9">
    <location>
        <begin position="101"/>
        <end position="119"/>
    </location>
</feature>
<feature type="helix" evidence="9">
    <location>
        <begin position="122"/>
        <end position="144"/>
    </location>
</feature>
<feature type="strand" evidence="9">
    <location>
        <begin position="147"/>
        <end position="150"/>
    </location>
</feature>
<feature type="helix" evidence="9">
    <location>
        <begin position="152"/>
        <end position="154"/>
    </location>
</feature>
<feature type="helix" evidence="9">
    <location>
        <begin position="164"/>
        <end position="184"/>
    </location>
</feature>
<sequence length="204" mass="20710">MRLRISEAVVLFLLGAVAALIGDHSHVVTGTTVYHTDAVPFVWSSPFWFPILVGAATASLAELRLHLPAPRDGVTARQALGGVAAVVGTYVTTALVHAFPVVPVTALVCAAAAITWCVLGDGPGAACGVVIAVIGPAVEIALVQLGVFAYHPDSDGLFGVAPFLAPLYFAFGVVAALLGELAVARRPQLGPPVCDTVSRGPGAG</sequence>
<gene>
    <name evidence="5" type="ordered locus">Mvan_1475</name>
</gene>